<sequence>MHKSVQDIVNMKKGKKKVSVITGYDYTLASLCDKAGIDVLLVGDSAGMVMLGYENTIPVTMDQMCMFTEAVSRARNNALLVADLPFMSYQASIEDAINNSGKLIKAGADAVKLEGGSIMAETISAIVDVGIPVMGHIGLQPQTTMLSQGYKVQGRTKDSAMQLIQDAKELEEAGVFSIALEMVSHEVAQIISETVSAPTIGIGSGVNCDGQVLVVQDLLGMYDKIKPKFAKRYMNLSEDIVKSLEDYKNDVESNTFPAEENWFSMDPEELKKLREQIGS</sequence>
<gene>
    <name evidence="1" type="primary">panB</name>
    <name type="ordered locus">Nmar_1720</name>
</gene>
<protein>
    <recommendedName>
        <fullName evidence="1">3-methyl-2-oxobutanoate hydroxymethyltransferase</fullName>
        <ecNumber evidence="1">2.1.2.11</ecNumber>
    </recommendedName>
    <alternativeName>
        <fullName evidence="1">Ketopantoate hydroxymethyltransferase</fullName>
        <shortName evidence="1">KPHMT</shortName>
    </alternativeName>
</protein>
<feature type="chain" id="PRO_1000123387" description="3-methyl-2-oxobutanoate hydroxymethyltransferase">
    <location>
        <begin position="1"/>
        <end position="279"/>
    </location>
</feature>
<feature type="active site" description="Proton acceptor" evidence="1">
    <location>
        <position position="181"/>
    </location>
</feature>
<feature type="binding site" evidence="1">
    <location>
        <begin position="44"/>
        <end position="45"/>
    </location>
    <ligand>
        <name>3-methyl-2-oxobutanoate</name>
        <dbReference type="ChEBI" id="CHEBI:11851"/>
    </ligand>
</feature>
<feature type="binding site" evidence="1">
    <location>
        <position position="44"/>
    </location>
    <ligand>
        <name>Mg(2+)</name>
        <dbReference type="ChEBI" id="CHEBI:18420"/>
    </ligand>
</feature>
<feature type="binding site" evidence="1">
    <location>
        <position position="83"/>
    </location>
    <ligand>
        <name>3-methyl-2-oxobutanoate</name>
        <dbReference type="ChEBI" id="CHEBI:11851"/>
    </ligand>
</feature>
<feature type="binding site" evidence="1">
    <location>
        <position position="83"/>
    </location>
    <ligand>
        <name>Mg(2+)</name>
        <dbReference type="ChEBI" id="CHEBI:18420"/>
    </ligand>
</feature>
<feature type="binding site" evidence="1">
    <location>
        <position position="112"/>
    </location>
    <ligand>
        <name>3-methyl-2-oxobutanoate</name>
        <dbReference type="ChEBI" id="CHEBI:11851"/>
    </ligand>
</feature>
<feature type="binding site" evidence="1">
    <location>
        <position position="114"/>
    </location>
    <ligand>
        <name>Mg(2+)</name>
        <dbReference type="ChEBI" id="CHEBI:18420"/>
    </ligand>
</feature>
<accession>A9A2T9</accession>
<dbReference type="EC" id="2.1.2.11" evidence="1"/>
<dbReference type="EMBL" id="CP000866">
    <property type="protein sequence ID" value="ABX13616.1"/>
    <property type="molecule type" value="Genomic_DNA"/>
</dbReference>
<dbReference type="RefSeq" id="WP_012216102.1">
    <property type="nucleotide sequence ID" value="NC_010085.1"/>
</dbReference>
<dbReference type="SMR" id="A9A2T9"/>
<dbReference type="FunCoup" id="A9A2T9">
    <property type="interactions" value="78"/>
</dbReference>
<dbReference type="STRING" id="436308.Nmar_1720"/>
<dbReference type="EnsemblBacteria" id="ABX13616">
    <property type="protein sequence ID" value="ABX13616"/>
    <property type="gene ID" value="Nmar_1720"/>
</dbReference>
<dbReference type="GeneID" id="5773568"/>
<dbReference type="KEGG" id="nmr:Nmar_1720"/>
<dbReference type="eggNOG" id="arCOG00584">
    <property type="taxonomic scope" value="Archaea"/>
</dbReference>
<dbReference type="HOGENOM" id="CLU_036645_1_0_2"/>
<dbReference type="InParanoid" id="A9A2T9"/>
<dbReference type="OrthoDB" id="8414at2157"/>
<dbReference type="PhylomeDB" id="A9A2T9"/>
<dbReference type="UniPathway" id="UPA00241"/>
<dbReference type="Proteomes" id="UP000000792">
    <property type="component" value="Chromosome"/>
</dbReference>
<dbReference type="GO" id="GO:0005737">
    <property type="term" value="C:cytoplasm"/>
    <property type="evidence" value="ECO:0007669"/>
    <property type="project" value="UniProtKB-SubCell"/>
</dbReference>
<dbReference type="GO" id="GO:0003864">
    <property type="term" value="F:3-methyl-2-oxobutanoate hydroxymethyltransferase activity"/>
    <property type="evidence" value="ECO:0000318"/>
    <property type="project" value="GO_Central"/>
</dbReference>
<dbReference type="GO" id="GO:0000287">
    <property type="term" value="F:magnesium ion binding"/>
    <property type="evidence" value="ECO:0000318"/>
    <property type="project" value="GO_Central"/>
</dbReference>
<dbReference type="GO" id="GO:0015937">
    <property type="term" value="P:coenzyme A biosynthetic process"/>
    <property type="evidence" value="ECO:0007669"/>
    <property type="project" value="UniProtKB-UniRule"/>
</dbReference>
<dbReference type="GO" id="GO:0015940">
    <property type="term" value="P:pantothenate biosynthetic process"/>
    <property type="evidence" value="ECO:0000318"/>
    <property type="project" value="GO_Central"/>
</dbReference>
<dbReference type="CDD" id="cd06557">
    <property type="entry name" value="KPHMT-like"/>
    <property type="match status" value="1"/>
</dbReference>
<dbReference type="FunFam" id="3.20.20.60:FF:000003">
    <property type="entry name" value="3-methyl-2-oxobutanoate hydroxymethyltransferase"/>
    <property type="match status" value="1"/>
</dbReference>
<dbReference type="Gene3D" id="3.20.20.60">
    <property type="entry name" value="Phosphoenolpyruvate-binding domains"/>
    <property type="match status" value="1"/>
</dbReference>
<dbReference type="HAMAP" id="MF_00156">
    <property type="entry name" value="PanB"/>
    <property type="match status" value="1"/>
</dbReference>
<dbReference type="InterPro" id="IPR003700">
    <property type="entry name" value="Pantoate_hydroxy_MeTrfase"/>
</dbReference>
<dbReference type="InterPro" id="IPR015813">
    <property type="entry name" value="Pyrv/PenolPyrv_kinase-like_dom"/>
</dbReference>
<dbReference type="InterPro" id="IPR040442">
    <property type="entry name" value="Pyrv_kinase-like_dom_sf"/>
</dbReference>
<dbReference type="NCBIfam" id="TIGR00222">
    <property type="entry name" value="panB"/>
    <property type="match status" value="1"/>
</dbReference>
<dbReference type="NCBIfam" id="NF001452">
    <property type="entry name" value="PRK00311.1"/>
    <property type="match status" value="1"/>
</dbReference>
<dbReference type="PANTHER" id="PTHR20881">
    <property type="entry name" value="3-METHYL-2-OXOBUTANOATE HYDROXYMETHYLTRANSFERASE"/>
    <property type="match status" value="1"/>
</dbReference>
<dbReference type="PANTHER" id="PTHR20881:SF0">
    <property type="entry name" value="3-METHYL-2-OXOBUTANOATE HYDROXYMETHYLTRANSFERASE"/>
    <property type="match status" value="1"/>
</dbReference>
<dbReference type="Pfam" id="PF02548">
    <property type="entry name" value="Pantoate_transf"/>
    <property type="match status" value="1"/>
</dbReference>
<dbReference type="PIRSF" id="PIRSF000388">
    <property type="entry name" value="Pantoate_hydroxy_MeTrfase"/>
    <property type="match status" value="1"/>
</dbReference>
<dbReference type="SUPFAM" id="SSF51621">
    <property type="entry name" value="Phosphoenolpyruvate/pyruvate domain"/>
    <property type="match status" value="1"/>
</dbReference>
<name>PANB_NITMS</name>
<reference key="1">
    <citation type="journal article" date="2010" name="Proc. Natl. Acad. Sci. U.S.A.">
        <title>Nitrosopumilus maritimus genome reveals unique mechanisms for nitrification and autotrophy in globally distributed marine crenarchaea.</title>
        <authorList>
            <person name="Walker C.B."/>
            <person name="de la Torre J.R."/>
            <person name="Klotz M.G."/>
            <person name="Urakawa H."/>
            <person name="Pinel N."/>
            <person name="Arp D.J."/>
            <person name="Brochier-Armanet C."/>
            <person name="Chain P.S."/>
            <person name="Chan P.P."/>
            <person name="Gollabgir A."/>
            <person name="Hemp J."/>
            <person name="Hugler M."/>
            <person name="Karr E.A."/>
            <person name="Konneke M."/>
            <person name="Shin M."/>
            <person name="Lawton T.J."/>
            <person name="Lowe T."/>
            <person name="Martens-Habbena W."/>
            <person name="Sayavedra-Soto L.A."/>
            <person name="Lang D."/>
            <person name="Sievert S.M."/>
            <person name="Rosenzweig A.C."/>
            <person name="Manning G."/>
            <person name="Stahl D.A."/>
        </authorList>
    </citation>
    <scope>NUCLEOTIDE SEQUENCE [LARGE SCALE GENOMIC DNA]</scope>
    <source>
        <strain>SCM1</strain>
    </source>
</reference>
<comment type="function">
    <text evidence="1">Catalyzes the reversible reaction in which hydroxymethyl group from 5,10-methylenetetrahydrofolate is transferred onto alpha-ketoisovalerate to form ketopantoate.</text>
</comment>
<comment type="catalytic activity">
    <reaction evidence="1">
        <text>3-methyl-2-oxobutanoate + (6R)-5,10-methylene-5,6,7,8-tetrahydrofolate + H2O = 2-dehydropantoate + (6S)-5,6,7,8-tetrahydrofolate</text>
        <dbReference type="Rhea" id="RHEA:11824"/>
        <dbReference type="ChEBI" id="CHEBI:11561"/>
        <dbReference type="ChEBI" id="CHEBI:11851"/>
        <dbReference type="ChEBI" id="CHEBI:15377"/>
        <dbReference type="ChEBI" id="CHEBI:15636"/>
        <dbReference type="ChEBI" id="CHEBI:57453"/>
        <dbReference type="EC" id="2.1.2.11"/>
    </reaction>
</comment>
<comment type="cofactor">
    <cofactor evidence="1">
        <name>Mg(2+)</name>
        <dbReference type="ChEBI" id="CHEBI:18420"/>
    </cofactor>
    <text evidence="1">Binds 1 Mg(2+) ion per subunit.</text>
</comment>
<comment type="pathway">
    <text evidence="1">Cofactor biosynthesis; coenzyme A biosynthesis.</text>
</comment>
<comment type="subunit">
    <text evidence="1">Homodecamer; pentamer of dimers.</text>
</comment>
<comment type="subcellular location">
    <subcellularLocation>
        <location evidence="1">Cytoplasm</location>
    </subcellularLocation>
</comment>
<comment type="similarity">
    <text evidence="1">Belongs to the PanB family.</text>
</comment>
<proteinExistence type="inferred from homology"/>
<keyword id="KW-0173">Coenzyme A biosynthesis</keyword>
<keyword id="KW-0963">Cytoplasm</keyword>
<keyword id="KW-0460">Magnesium</keyword>
<keyword id="KW-0479">Metal-binding</keyword>
<keyword id="KW-1185">Reference proteome</keyword>
<keyword id="KW-0808">Transferase</keyword>
<evidence type="ECO:0000255" key="1">
    <source>
        <dbReference type="HAMAP-Rule" id="MF_00156"/>
    </source>
</evidence>
<organism>
    <name type="scientific">Nitrosopumilus maritimus (strain SCM1)</name>
    <dbReference type="NCBI Taxonomy" id="436308"/>
    <lineage>
        <taxon>Archaea</taxon>
        <taxon>Nitrososphaerota</taxon>
        <taxon>Nitrososphaeria</taxon>
        <taxon>Nitrosopumilales</taxon>
        <taxon>Nitrosopumilaceae</taxon>
        <taxon>Nitrosopumilus</taxon>
    </lineage>
</organism>